<organism>
    <name type="scientific">Rhizorhabdus wittichii (strain DSM 6014 / CCUG 31198 / JCM 15750 / NBRC 105917 / EY 4224 / RW1)</name>
    <name type="common">Sphingomonas wittichii</name>
    <dbReference type="NCBI Taxonomy" id="392499"/>
    <lineage>
        <taxon>Bacteria</taxon>
        <taxon>Pseudomonadati</taxon>
        <taxon>Pseudomonadota</taxon>
        <taxon>Alphaproteobacteria</taxon>
        <taxon>Sphingomonadales</taxon>
        <taxon>Sphingomonadaceae</taxon>
        <taxon>Rhizorhabdus</taxon>
    </lineage>
</organism>
<dbReference type="EC" id="6.3.2.1" evidence="1"/>
<dbReference type="EMBL" id="CP000699">
    <property type="protein sequence ID" value="ABQ69142.1"/>
    <property type="molecule type" value="Genomic_DNA"/>
</dbReference>
<dbReference type="SMR" id="A5VA26"/>
<dbReference type="STRING" id="392499.Swit_2788"/>
<dbReference type="PaxDb" id="392499-Swit_2788"/>
<dbReference type="KEGG" id="swi:Swit_2788"/>
<dbReference type="eggNOG" id="COG0414">
    <property type="taxonomic scope" value="Bacteria"/>
</dbReference>
<dbReference type="HOGENOM" id="CLU_047148_0_0_5"/>
<dbReference type="OrthoDB" id="9773087at2"/>
<dbReference type="UniPathway" id="UPA00028">
    <property type="reaction ID" value="UER00005"/>
</dbReference>
<dbReference type="Proteomes" id="UP000001989">
    <property type="component" value="Chromosome"/>
</dbReference>
<dbReference type="GO" id="GO:0005829">
    <property type="term" value="C:cytosol"/>
    <property type="evidence" value="ECO:0007669"/>
    <property type="project" value="TreeGrafter"/>
</dbReference>
<dbReference type="GO" id="GO:0005524">
    <property type="term" value="F:ATP binding"/>
    <property type="evidence" value="ECO:0007669"/>
    <property type="project" value="UniProtKB-KW"/>
</dbReference>
<dbReference type="GO" id="GO:0004592">
    <property type="term" value="F:pantoate-beta-alanine ligase activity"/>
    <property type="evidence" value="ECO:0007669"/>
    <property type="project" value="UniProtKB-UniRule"/>
</dbReference>
<dbReference type="GO" id="GO:0015940">
    <property type="term" value="P:pantothenate biosynthetic process"/>
    <property type="evidence" value="ECO:0007669"/>
    <property type="project" value="UniProtKB-UniRule"/>
</dbReference>
<dbReference type="CDD" id="cd00560">
    <property type="entry name" value="PanC"/>
    <property type="match status" value="1"/>
</dbReference>
<dbReference type="FunFam" id="3.40.50.620:FF:000114">
    <property type="entry name" value="Pantothenate synthetase"/>
    <property type="match status" value="1"/>
</dbReference>
<dbReference type="Gene3D" id="3.40.50.620">
    <property type="entry name" value="HUPs"/>
    <property type="match status" value="1"/>
</dbReference>
<dbReference type="Gene3D" id="3.30.1300.10">
    <property type="entry name" value="Pantoate-beta-alanine ligase, C-terminal domain"/>
    <property type="match status" value="1"/>
</dbReference>
<dbReference type="HAMAP" id="MF_00158">
    <property type="entry name" value="PanC"/>
    <property type="match status" value="1"/>
</dbReference>
<dbReference type="InterPro" id="IPR003721">
    <property type="entry name" value="Pantoate_ligase"/>
</dbReference>
<dbReference type="InterPro" id="IPR042176">
    <property type="entry name" value="Pantoate_ligase_C"/>
</dbReference>
<dbReference type="InterPro" id="IPR014729">
    <property type="entry name" value="Rossmann-like_a/b/a_fold"/>
</dbReference>
<dbReference type="NCBIfam" id="TIGR00018">
    <property type="entry name" value="panC"/>
    <property type="match status" value="1"/>
</dbReference>
<dbReference type="PANTHER" id="PTHR21299">
    <property type="entry name" value="CYTIDYLATE KINASE/PANTOATE-BETA-ALANINE LIGASE"/>
    <property type="match status" value="1"/>
</dbReference>
<dbReference type="PANTHER" id="PTHR21299:SF1">
    <property type="entry name" value="PANTOATE--BETA-ALANINE LIGASE"/>
    <property type="match status" value="1"/>
</dbReference>
<dbReference type="Pfam" id="PF02569">
    <property type="entry name" value="Pantoate_ligase"/>
    <property type="match status" value="1"/>
</dbReference>
<dbReference type="SUPFAM" id="SSF52374">
    <property type="entry name" value="Nucleotidylyl transferase"/>
    <property type="match status" value="1"/>
</dbReference>
<sequence length="282" mass="29653">MQIVRNIDDLRQEVAKLRISGAPVALVPTMGALHRGHVALVDAARSRGCEVVVSIFVNPTQFGPSEDLDAYPRREAADAAMLDGAGATLLWAPDVATMYPPGFATSISVGGVSERWDGAARPGHFAGVATVVTKLFQQVKPDIAFFGEKDFQQLAVIRRFVADLDIDIEIVGVPTQRDDDGLALSSRNAYLSPEERVTARTLPRALGEAAAAIGRGGDVAAALAAAIARLAEAGFDPIDYVALVDAASLEPIDRLDGPARLIAAARLGGTRLIDNLAVEPAP</sequence>
<gene>
    <name evidence="1" type="primary">panC</name>
    <name type="ordered locus">Swit_2788</name>
</gene>
<protein>
    <recommendedName>
        <fullName evidence="1">Pantothenate synthetase</fullName>
        <shortName evidence="1">PS</shortName>
        <ecNumber evidence="1">6.3.2.1</ecNumber>
    </recommendedName>
    <alternativeName>
        <fullName evidence="1">Pantoate--beta-alanine ligase</fullName>
    </alternativeName>
    <alternativeName>
        <fullName evidence="1">Pantoate-activating enzyme</fullName>
    </alternativeName>
</protein>
<keyword id="KW-0067">ATP-binding</keyword>
<keyword id="KW-0963">Cytoplasm</keyword>
<keyword id="KW-0436">Ligase</keyword>
<keyword id="KW-0547">Nucleotide-binding</keyword>
<keyword id="KW-0566">Pantothenate biosynthesis</keyword>
<keyword id="KW-1185">Reference proteome</keyword>
<reference key="1">
    <citation type="journal article" date="2010" name="J. Bacteriol.">
        <title>Genome sequence of the dioxin-mineralizing bacterium Sphingomonas wittichii RW1.</title>
        <authorList>
            <person name="Miller T.R."/>
            <person name="Delcher A.L."/>
            <person name="Salzberg S.L."/>
            <person name="Saunders E."/>
            <person name="Detter J.C."/>
            <person name="Halden R.U."/>
        </authorList>
    </citation>
    <scope>NUCLEOTIDE SEQUENCE [LARGE SCALE GENOMIC DNA]</scope>
    <source>
        <strain>DSM 6014 / CCUG 31198 / JCM 15750 / NBRC 105917 / EY 4224 / RW1</strain>
    </source>
</reference>
<name>PANC_RHIWR</name>
<evidence type="ECO:0000255" key="1">
    <source>
        <dbReference type="HAMAP-Rule" id="MF_00158"/>
    </source>
</evidence>
<accession>A5VA26</accession>
<comment type="function">
    <text evidence="1">Catalyzes the condensation of pantoate with beta-alanine in an ATP-dependent reaction via a pantoyl-adenylate intermediate.</text>
</comment>
<comment type="catalytic activity">
    <reaction evidence="1">
        <text>(R)-pantoate + beta-alanine + ATP = (R)-pantothenate + AMP + diphosphate + H(+)</text>
        <dbReference type="Rhea" id="RHEA:10912"/>
        <dbReference type="ChEBI" id="CHEBI:15378"/>
        <dbReference type="ChEBI" id="CHEBI:15980"/>
        <dbReference type="ChEBI" id="CHEBI:29032"/>
        <dbReference type="ChEBI" id="CHEBI:30616"/>
        <dbReference type="ChEBI" id="CHEBI:33019"/>
        <dbReference type="ChEBI" id="CHEBI:57966"/>
        <dbReference type="ChEBI" id="CHEBI:456215"/>
        <dbReference type="EC" id="6.3.2.1"/>
    </reaction>
</comment>
<comment type="pathway">
    <text evidence="1">Cofactor biosynthesis; (R)-pantothenate biosynthesis; (R)-pantothenate from (R)-pantoate and beta-alanine: step 1/1.</text>
</comment>
<comment type="subunit">
    <text evidence="1">Homodimer.</text>
</comment>
<comment type="subcellular location">
    <subcellularLocation>
        <location evidence="1">Cytoplasm</location>
    </subcellularLocation>
</comment>
<comment type="miscellaneous">
    <text evidence="1">The reaction proceeds by a bi uni uni bi ping pong mechanism.</text>
</comment>
<comment type="similarity">
    <text evidence="1">Belongs to the pantothenate synthetase family.</text>
</comment>
<feature type="chain" id="PRO_1000118156" description="Pantothenate synthetase">
    <location>
        <begin position="1"/>
        <end position="282"/>
    </location>
</feature>
<feature type="active site" description="Proton donor" evidence="1">
    <location>
        <position position="37"/>
    </location>
</feature>
<feature type="binding site" evidence="1">
    <location>
        <begin position="30"/>
        <end position="37"/>
    </location>
    <ligand>
        <name>ATP</name>
        <dbReference type="ChEBI" id="CHEBI:30616"/>
    </ligand>
</feature>
<feature type="binding site" evidence="1">
    <location>
        <position position="61"/>
    </location>
    <ligand>
        <name>(R)-pantoate</name>
        <dbReference type="ChEBI" id="CHEBI:15980"/>
    </ligand>
</feature>
<feature type="binding site" evidence="1">
    <location>
        <position position="61"/>
    </location>
    <ligand>
        <name>beta-alanine</name>
        <dbReference type="ChEBI" id="CHEBI:57966"/>
    </ligand>
</feature>
<feature type="binding site" evidence="1">
    <location>
        <begin position="147"/>
        <end position="150"/>
    </location>
    <ligand>
        <name>ATP</name>
        <dbReference type="ChEBI" id="CHEBI:30616"/>
    </ligand>
</feature>
<feature type="binding site" evidence="1">
    <location>
        <position position="153"/>
    </location>
    <ligand>
        <name>(R)-pantoate</name>
        <dbReference type="ChEBI" id="CHEBI:15980"/>
    </ligand>
</feature>
<feature type="binding site" evidence="1">
    <location>
        <begin position="184"/>
        <end position="187"/>
    </location>
    <ligand>
        <name>ATP</name>
        <dbReference type="ChEBI" id="CHEBI:30616"/>
    </ligand>
</feature>
<proteinExistence type="inferred from homology"/>